<name>ZN233_HUMAN</name>
<gene>
    <name type="primary">ZNF233</name>
</gene>
<reference key="1">
    <citation type="journal article" date="2004" name="Nat. Genet.">
        <title>Complete sequencing and characterization of 21,243 full-length human cDNAs.</title>
        <authorList>
            <person name="Ota T."/>
            <person name="Suzuki Y."/>
            <person name="Nishikawa T."/>
            <person name="Otsuki T."/>
            <person name="Sugiyama T."/>
            <person name="Irie R."/>
            <person name="Wakamatsu A."/>
            <person name="Hayashi K."/>
            <person name="Sato H."/>
            <person name="Nagai K."/>
            <person name="Kimura K."/>
            <person name="Makita H."/>
            <person name="Sekine M."/>
            <person name="Obayashi M."/>
            <person name="Nishi T."/>
            <person name="Shibahara T."/>
            <person name="Tanaka T."/>
            <person name="Ishii S."/>
            <person name="Yamamoto J."/>
            <person name="Saito K."/>
            <person name="Kawai Y."/>
            <person name="Isono Y."/>
            <person name="Nakamura Y."/>
            <person name="Nagahari K."/>
            <person name="Murakami K."/>
            <person name="Yasuda T."/>
            <person name="Iwayanagi T."/>
            <person name="Wagatsuma M."/>
            <person name="Shiratori A."/>
            <person name="Sudo H."/>
            <person name="Hosoiri T."/>
            <person name="Kaku Y."/>
            <person name="Kodaira H."/>
            <person name="Kondo H."/>
            <person name="Sugawara M."/>
            <person name="Takahashi M."/>
            <person name="Kanda K."/>
            <person name="Yokoi T."/>
            <person name="Furuya T."/>
            <person name="Kikkawa E."/>
            <person name="Omura Y."/>
            <person name="Abe K."/>
            <person name="Kamihara K."/>
            <person name="Katsuta N."/>
            <person name="Sato K."/>
            <person name="Tanikawa M."/>
            <person name="Yamazaki M."/>
            <person name="Ninomiya K."/>
            <person name="Ishibashi T."/>
            <person name="Yamashita H."/>
            <person name="Murakawa K."/>
            <person name="Fujimori K."/>
            <person name="Tanai H."/>
            <person name="Kimata M."/>
            <person name="Watanabe M."/>
            <person name="Hiraoka S."/>
            <person name="Chiba Y."/>
            <person name="Ishida S."/>
            <person name="Ono Y."/>
            <person name="Takiguchi S."/>
            <person name="Watanabe S."/>
            <person name="Yosida M."/>
            <person name="Hotuta T."/>
            <person name="Kusano J."/>
            <person name="Kanehori K."/>
            <person name="Takahashi-Fujii A."/>
            <person name="Hara H."/>
            <person name="Tanase T.-O."/>
            <person name="Nomura Y."/>
            <person name="Togiya S."/>
            <person name="Komai F."/>
            <person name="Hara R."/>
            <person name="Takeuchi K."/>
            <person name="Arita M."/>
            <person name="Imose N."/>
            <person name="Musashino K."/>
            <person name="Yuuki H."/>
            <person name="Oshima A."/>
            <person name="Sasaki N."/>
            <person name="Aotsuka S."/>
            <person name="Yoshikawa Y."/>
            <person name="Matsunawa H."/>
            <person name="Ichihara T."/>
            <person name="Shiohata N."/>
            <person name="Sano S."/>
            <person name="Moriya S."/>
            <person name="Momiyama H."/>
            <person name="Satoh N."/>
            <person name="Takami S."/>
            <person name="Terashima Y."/>
            <person name="Suzuki O."/>
            <person name="Nakagawa S."/>
            <person name="Senoh A."/>
            <person name="Mizoguchi H."/>
            <person name="Goto Y."/>
            <person name="Shimizu F."/>
            <person name="Wakebe H."/>
            <person name="Hishigaki H."/>
            <person name="Watanabe T."/>
            <person name="Sugiyama A."/>
            <person name="Takemoto M."/>
            <person name="Kawakami B."/>
            <person name="Yamazaki M."/>
            <person name="Watanabe K."/>
            <person name="Kumagai A."/>
            <person name="Itakura S."/>
            <person name="Fukuzumi Y."/>
            <person name="Fujimori Y."/>
            <person name="Komiyama M."/>
            <person name="Tashiro H."/>
            <person name="Tanigami A."/>
            <person name="Fujiwara T."/>
            <person name="Ono T."/>
            <person name="Yamada K."/>
            <person name="Fujii Y."/>
            <person name="Ozaki K."/>
            <person name="Hirao M."/>
            <person name="Ohmori Y."/>
            <person name="Kawabata A."/>
            <person name="Hikiji T."/>
            <person name="Kobatake N."/>
            <person name="Inagaki H."/>
            <person name="Ikema Y."/>
            <person name="Okamoto S."/>
            <person name="Okitani R."/>
            <person name="Kawakami T."/>
            <person name="Noguchi S."/>
            <person name="Itoh T."/>
            <person name="Shigeta K."/>
            <person name="Senba T."/>
            <person name="Matsumura K."/>
            <person name="Nakajima Y."/>
            <person name="Mizuno T."/>
            <person name="Morinaga M."/>
            <person name="Sasaki M."/>
            <person name="Togashi T."/>
            <person name="Oyama M."/>
            <person name="Hata H."/>
            <person name="Watanabe M."/>
            <person name="Komatsu T."/>
            <person name="Mizushima-Sugano J."/>
            <person name="Satoh T."/>
            <person name="Shirai Y."/>
            <person name="Takahashi Y."/>
            <person name="Nakagawa K."/>
            <person name="Okumura K."/>
            <person name="Nagase T."/>
            <person name="Nomura N."/>
            <person name="Kikuchi H."/>
            <person name="Masuho Y."/>
            <person name="Yamashita R."/>
            <person name="Nakai K."/>
            <person name="Yada T."/>
            <person name="Nakamura Y."/>
            <person name="Ohara O."/>
            <person name="Isogai T."/>
            <person name="Sugano S."/>
        </authorList>
    </citation>
    <scope>NUCLEOTIDE SEQUENCE [LARGE SCALE MRNA]</scope>
    <scope>VARIANT THR-531</scope>
    <source>
        <tissue>Tongue</tissue>
    </source>
</reference>
<reference key="2">
    <citation type="journal article" date="2004" name="Nature">
        <title>The DNA sequence and biology of human chromosome 19.</title>
        <authorList>
            <person name="Grimwood J."/>
            <person name="Gordon L.A."/>
            <person name="Olsen A.S."/>
            <person name="Terry A."/>
            <person name="Schmutz J."/>
            <person name="Lamerdin J.E."/>
            <person name="Hellsten U."/>
            <person name="Goodstein D."/>
            <person name="Couronne O."/>
            <person name="Tran-Gyamfi M."/>
            <person name="Aerts A."/>
            <person name="Altherr M."/>
            <person name="Ashworth L."/>
            <person name="Bajorek E."/>
            <person name="Black S."/>
            <person name="Branscomb E."/>
            <person name="Caenepeel S."/>
            <person name="Carrano A.V."/>
            <person name="Caoile C."/>
            <person name="Chan Y.M."/>
            <person name="Christensen M."/>
            <person name="Cleland C.A."/>
            <person name="Copeland A."/>
            <person name="Dalin E."/>
            <person name="Dehal P."/>
            <person name="Denys M."/>
            <person name="Detter J.C."/>
            <person name="Escobar J."/>
            <person name="Flowers D."/>
            <person name="Fotopulos D."/>
            <person name="Garcia C."/>
            <person name="Georgescu A.M."/>
            <person name="Glavina T."/>
            <person name="Gomez M."/>
            <person name="Gonzales E."/>
            <person name="Groza M."/>
            <person name="Hammon N."/>
            <person name="Hawkins T."/>
            <person name="Haydu L."/>
            <person name="Ho I."/>
            <person name="Huang W."/>
            <person name="Israni S."/>
            <person name="Jett J."/>
            <person name="Kadner K."/>
            <person name="Kimball H."/>
            <person name="Kobayashi A."/>
            <person name="Larionov V."/>
            <person name="Leem S.-H."/>
            <person name="Lopez F."/>
            <person name="Lou Y."/>
            <person name="Lowry S."/>
            <person name="Malfatti S."/>
            <person name="Martinez D."/>
            <person name="McCready P.M."/>
            <person name="Medina C."/>
            <person name="Morgan J."/>
            <person name="Nelson K."/>
            <person name="Nolan M."/>
            <person name="Ovcharenko I."/>
            <person name="Pitluck S."/>
            <person name="Pollard M."/>
            <person name="Popkie A.P."/>
            <person name="Predki P."/>
            <person name="Quan G."/>
            <person name="Ramirez L."/>
            <person name="Rash S."/>
            <person name="Retterer J."/>
            <person name="Rodriguez A."/>
            <person name="Rogers S."/>
            <person name="Salamov A."/>
            <person name="Salazar A."/>
            <person name="She X."/>
            <person name="Smith D."/>
            <person name="Slezak T."/>
            <person name="Solovyev V."/>
            <person name="Thayer N."/>
            <person name="Tice H."/>
            <person name="Tsai M."/>
            <person name="Ustaszewska A."/>
            <person name="Vo N."/>
            <person name="Wagner M."/>
            <person name="Wheeler J."/>
            <person name="Wu K."/>
            <person name="Xie G."/>
            <person name="Yang J."/>
            <person name="Dubchak I."/>
            <person name="Furey T.S."/>
            <person name="DeJong P."/>
            <person name="Dickson M."/>
            <person name="Gordon D."/>
            <person name="Eichler E.E."/>
            <person name="Pennacchio L.A."/>
            <person name="Richardson P."/>
            <person name="Stubbs L."/>
            <person name="Rokhsar D.S."/>
            <person name="Myers R.M."/>
            <person name="Rubin E.M."/>
            <person name="Lucas S.M."/>
        </authorList>
    </citation>
    <scope>NUCLEOTIDE SEQUENCE [LARGE SCALE GENOMIC DNA]</scope>
    <scope>VARIANT THR-531</scope>
</reference>
<reference key="3">
    <citation type="journal article" date="2004" name="Genome Res.">
        <title>The status, quality, and expansion of the NIH full-length cDNA project: the Mammalian Gene Collection (MGC).</title>
        <authorList>
            <consortium name="The MGC Project Team"/>
        </authorList>
    </citation>
    <scope>NUCLEOTIDE SEQUENCE [LARGE SCALE MRNA]</scope>
    <scope>VARIANT THR-531</scope>
    <source>
        <tissue>Brain</tissue>
    </source>
</reference>
<reference key="4">
    <citation type="journal article" date="2003" name="Genome Res.">
        <title>Differential expansion of zinc-finger transcription factor loci in homologous human and mouse gene clusters.</title>
        <authorList>
            <person name="Shannon M."/>
            <person name="Hamilton A.T."/>
            <person name="Gordon L."/>
            <person name="Branscomb E."/>
            <person name="Stubbs L."/>
        </authorList>
    </citation>
    <scope>NUCLEOTIDE SEQUENCE [MRNA] OF 46-153</scope>
    <source>
        <tissue>Testis</tissue>
    </source>
</reference>
<sequence length="670" mass="76861">MTKFQEMVTFKDVAVVFTREELGLLDLAQRKLYQDVMLENFRNLLSVGYQPFKLDVILQLGKEDKLRMMETEIQGDGCSGHKNQNEIDTLQEVRLRFLSYEDLICWQIWEQFTSKLTSNQDLIINLQGKRSKLLKQGDSPCQVWTGESSQVSEDENYVIKLQGESSNSIKNQELPLRTTWDFWRKMYLREPQNYQSRCQQIDVKNKLCKCDHCVRQRIAHQHDDHGVHKREKAFSHNNCGKDCVKESSQHSIIQSGEQTSDENGKGLSVGSNLELHQQLHLRDKPHVNVEYGKGIGYSSGLPRHQCFHIGEKCYRNGDSGEGFSQGSHLQPHQRVSTGENLYRCQVYARSSNQNSCLPSHELTHPGEKLCTCGRCGKGFHHSLDFDIHCVDSAGERACKCDVYDKGFSQTSQLQAHQRGHSRDKTYKWEVSDRIFNRNSGLHQRVHTGEKPYKCEVCDKGFSKASNLQAHQRIHTGEKPYKCDVCDKNFSRNSHLQAHQRVHTGEKPYKCDTCGKDFSQISHLQAHQRVHKGEKPYKCETCGKGFSQSSHLQDHQQVHTGENPYKCDVCGKGFSWSSHLQAHQRVHTGEKPYKCEECRKGFIWNSYLHVHQRIHTGEKPYKCGMCGKSFSQTSHLQAHQRVHTGEKPYKCFVCGKGFSKSSLSSDSSESP</sequence>
<evidence type="ECO:0000255" key="1">
    <source>
        <dbReference type="PROSITE-ProRule" id="PRU00042"/>
    </source>
</evidence>
<evidence type="ECO:0000255" key="2">
    <source>
        <dbReference type="PROSITE-ProRule" id="PRU00119"/>
    </source>
</evidence>
<evidence type="ECO:0000269" key="3">
    <source>
    </source>
</evidence>
<evidence type="ECO:0000269" key="4">
    <source>
    </source>
</evidence>
<evidence type="ECO:0000269" key="5">
    <source>
    </source>
</evidence>
<evidence type="ECO:0000305" key="6"/>
<accession>A6NK53</accession>
<accession>B2RN78</accession>
<accession>B2RN79</accession>
<accession>Q86WL8</accession>
<proteinExistence type="evidence at transcript level"/>
<protein>
    <recommendedName>
        <fullName>Zinc finger protein 233</fullName>
    </recommendedName>
</protein>
<keyword id="KW-0238">DNA-binding</keyword>
<keyword id="KW-0479">Metal-binding</keyword>
<keyword id="KW-0539">Nucleus</keyword>
<keyword id="KW-1185">Reference proteome</keyword>
<keyword id="KW-0677">Repeat</keyword>
<keyword id="KW-0804">Transcription</keyword>
<keyword id="KW-0805">Transcription regulation</keyword>
<keyword id="KW-0862">Zinc</keyword>
<keyword id="KW-0863">Zinc-finger</keyword>
<comment type="function">
    <text>May be involved in transcriptional regulation.</text>
</comment>
<comment type="subcellular location">
    <subcellularLocation>
        <location evidence="6">Nucleus</location>
    </subcellularLocation>
</comment>
<comment type="similarity">
    <text evidence="6">Belongs to the krueppel C2H2-type zinc-finger protein family.</text>
</comment>
<organism>
    <name type="scientific">Homo sapiens</name>
    <name type="common">Human</name>
    <dbReference type="NCBI Taxonomy" id="9606"/>
    <lineage>
        <taxon>Eukaryota</taxon>
        <taxon>Metazoa</taxon>
        <taxon>Chordata</taxon>
        <taxon>Craniata</taxon>
        <taxon>Vertebrata</taxon>
        <taxon>Euteleostomi</taxon>
        <taxon>Mammalia</taxon>
        <taxon>Eutheria</taxon>
        <taxon>Euarchontoglires</taxon>
        <taxon>Primates</taxon>
        <taxon>Haplorrhini</taxon>
        <taxon>Catarrhini</taxon>
        <taxon>Hominidae</taxon>
        <taxon>Homo</taxon>
    </lineage>
</organism>
<feature type="chain" id="PRO_0000304407" description="Zinc finger protein 233">
    <location>
        <begin position="1"/>
        <end position="670"/>
    </location>
</feature>
<feature type="domain" description="KRAB" evidence="2">
    <location>
        <begin position="8"/>
        <end position="79"/>
    </location>
</feature>
<feature type="zinc finger region" description="C2H2-type 1; degenerate" evidence="1">
    <location>
        <begin position="258"/>
        <end position="280"/>
    </location>
</feature>
<feature type="zinc finger region" description="C2H2-type 2; degenerate" evidence="1">
    <location>
        <begin position="311"/>
        <end position="336"/>
    </location>
</feature>
<feature type="zinc finger region" description="C2H2-type 3; degenerate" evidence="1">
    <location>
        <begin position="342"/>
        <end position="364"/>
    </location>
</feature>
<feature type="zinc finger region" description="C2H2-type 4; degenerate" evidence="1">
    <location>
        <begin position="370"/>
        <end position="392"/>
    </location>
</feature>
<feature type="zinc finger region" description="C2H2-type 5; degenerate" evidence="1">
    <location>
        <begin position="398"/>
        <end position="420"/>
    </location>
</feature>
<feature type="zinc finger region" description="C2H2-type 6" evidence="1">
    <location>
        <begin position="452"/>
        <end position="474"/>
    </location>
</feature>
<feature type="zinc finger region" description="C2H2-type 7" evidence="1">
    <location>
        <begin position="480"/>
        <end position="502"/>
    </location>
</feature>
<feature type="zinc finger region" description="C2H2-type 8" evidence="1">
    <location>
        <begin position="508"/>
        <end position="530"/>
    </location>
</feature>
<feature type="zinc finger region" description="C2H2-type 9" evidence="1">
    <location>
        <begin position="536"/>
        <end position="558"/>
    </location>
</feature>
<feature type="zinc finger region" description="C2H2-type 10" evidence="1">
    <location>
        <begin position="564"/>
        <end position="586"/>
    </location>
</feature>
<feature type="zinc finger region" description="C2H2-type 11" evidence="1">
    <location>
        <begin position="592"/>
        <end position="614"/>
    </location>
</feature>
<feature type="zinc finger region" description="C2H2-type 12" evidence="1">
    <location>
        <begin position="620"/>
        <end position="642"/>
    </location>
</feature>
<feature type="sequence variant" id="VAR_035022" description="In dbSNP:rs16978899.">
    <original>S</original>
    <variation>P</variation>
    <location>
        <position position="247"/>
    </location>
</feature>
<feature type="sequence variant" id="VAR_035023" description="In dbSNP:rs1233428." evidence="3 4 5">
    <original>K</original>
    <variation>T</variation>
    <location>
        <position position="531"/>
    </location>
</feature>
<feature type="sequence conflict" description="In Ref. 4; AAO45841." evidence="6" ref="4">
    <original>D</original>
    <variation>G</variation>
    <location>
        <position position="138"/>
    </location>
</feature>
<dbReference type="EMBL" id="AK095351">
    <property type="protein sequence ID" value="BAG53032.1"/>
    <property type="molecule type" value="mRNA"/>
</dbReference>
<dbReference type="EMBL" id="AC138470">
    <property type="status" value="NOT_ANNOTATED_CDS"/>
    <property type="molecule type" value="Genomic_DNA"/>
</dbReference>
<dbReference type="EMBL" id="AC092477">
    <property type="status" value="NOT_ANNOTATED_CDS"/>
    <property type="molecule type" value="Genomic_DNA"/>
</dbReference>
<dbReference type="EMBL" id="BC136734">
    <property type="protein sequence ID" value="AAI36735.1"/>
    <property type="molecule type" value="mRNA"/>
</dbReference>
<dbReference type="EMBL" id="BC136735">
    <property type="protein sequence ID" value="AAI36736.1"/>
    <property type="molecule type" value="mRNA"/>
</dbReference>
<dbReference type="EMBL" id="AY166792">
    <property type="protein sequence ID" value="AAO45841.1"/>
    <property type="molecule type" value="mRNA"/>
</dbReference>
<dbReference type="CCDS" id="CCDS33047.1"/>
<dbReference type="RefSeq" id="NP_001193934.1">
    <property type="nucleotide sequence ID" value="NM_001207005.2"/>
</dbReference>
<dbReference type="RefSeq" id="NP_861421.2">
    <property type="nucleotide sequence ID" value="NM_181756.3"/>
</dbReference>
<dbReference type="RefSeq" id="XP_024307257.1">
    <property type="nucleotide sequence ID" value="XM_024451489.2"/>
</dbReference>
<dbReference type="SMR" id="A6NK53"/>
<dbReference type="BioGRID" id="131691">
    <property type="interactions" value="2"/>
</dbReference>
<dbReference type="FunCoup" id="A6NK53">
    <property type="interactions" value="74"/>
</dbReference>
<dbReference type="IntAct" id="A6NK53">
    <property type="interactions" value="4"/>
</dbReference>
<dbReference type="STRING" id="9606.ENSP00000375820"/>
<dbReference type="GlyGen" id="A6NK53">
    <property type="glycosylation" value="1 site, 1 O-linked glycan (1 site)"/>
</dbReference>
<dbReference type="iPTMnet" id="A6NK53"/>
<dbReference type="PhosphoSitePlus" id="A6NK53"/>
<dbReference type="BioMuta" id="ZNF233"/>
<dbReference type="jPOST" id="A6NK53"/>
<dbReference type="MassIVE" id="A6NK53"/>
<dbReference type="PaxDb" id="9606-ENSP00000375820"/>
<dbReference type="PeptideAtlas" id="A6NK53"/>
<dbReference type="ProteomicsDB" id="1377"/>
<dbReference type="Antibodypedia" id="17700">
    <property type="antibodies" value="26 antibodies from 13 providers"/>
</dbReference>
<dbReference type="DNASU" id="353355"/>
<dbReference type="Ensembl" id="ENST00000391958.6">
    <property type="protein sequence ID" value="ENSP00000375820.1"/>
    <property type="gene ID" value="ENSG00000159915.13"/>
</dbReference>
<dbReference type="Ensembl" id="ENST00000683810.1">
    <property type="protein sequence ID" value="ENSP00000507588.1"/>
    <property type="gene ID" value="ENSG00000159915.13"/>
</dbReference>
<dbReference type="GeneID" id="353355"/>
<dbReference type="KEGG" id="hsa:353355"/>
<dbReference type="MANE-Select" id="ENST00000683810.1">
    <property type="protein sequence ID" value="ENSP00000507588.1"/>
    <property type="RefSeq nucleotide sequence ID" value="NM_001207005.2"/>
    <property type="RefSeq protein sequence ID" value="NP_001193934.1"/>
</dbReference>
<dbReference type="UCSC" id="uc002oyz.3">
    <property type="organism name" value="human"/>
</dbReference>
<dbReference type="AGR" id="HGNC:30946"/>
<dbReference type="CTD" id="353355"/>
<dbReference type="DisGeNET" id="353355"/>
<dbReference type="GeneCards" id="ZNF233"/>
<dbReference type="HGNC" id="HGNC:30946">
    <property type="gene designation" value="ZNF233"/>
</dbReference>
<dbReference type="HPA" id="ENSG00000159915">
    <property type="expression patterns" value="Tissue enhanced (testis)"/>
</dbReference>
<dbReference type="neXtProt" id="NX_A6NK53"/>
<dbReference type="OpenTargets" id="ENSG00000159915"/>
<dbReference type="PharmGKB" id="PA134917179"/>
<dbReference type="VEuPathDB" id="HostDB:ENSG00000159915"/>
<dbReference type="eggNOG" id="KOG1721">
    <property type="taxonomic scope" value="Eukaryota"/>
</dbReference>
<dbReference type="GeneTree" id="ENSGT00940000163265"/>
<dbReference type="HOGENOM" id="CLU_002678_0_12_1"/>
<dbReference type="InParanoid" id="A6NK53"/>
<dbReference type="OMA" id="LCTCGRC"/>
<dbReference type="OrthoDB" id="9411774at2759"/>
<dbReference type="PAN-GO" id="A6NK53">
    <property type="GO annotations" value="4 GO annotations based on evolutionary models"/>
</dbReference>
<dbReference type="PhylomeDB" id="A6NK53"/>
<dbReference type="TreeFam" id="TF350845"/>
<dbReference type="PathwayCommons" id="A6NK53"/>
<dbReference type="Reactome" id="R-HSA-212436">
    <property type="pathway name" value="Generic Transcription Pathway"/>
</dbReference>
<dbReference type="SignaLink" id="A6NK53"/>
<dbReference type="BioGRID-ORCS" id="353355">
    <property type="hits" value="8 hits in 1168 CRISPR screens"/>
</dbReference>
<dbReference type="ChiTaRS" id="ZNF233">
    <property type="organism name" value="human"/>
</dbReference>
<dbReference type="GenomeRNAi" id="353355"/>
<dbReference type="Pharos" id="A6NK53">
    <property type="development level" value="Tdark"/>
</dbReference>
<dbReference type="PRO" id="PR:A6NK53"/>
<dbReference type="Proteomes" id="UP000005640">
    <property type="component" value="Chromosome 19"/>
</dbReference>
<dbReference type="RNAct" id="A6NK53">
    <property type="molecule type" value="protein"/>
</dbReference>
<dbReference type="Bgee" id="ENSG00000159915">
    <property type="expression patterns" value="Expressed in primordial germ cell in gonad and 116 other cell types or tissues"/>
</dbReference>
<dbReference type="ExpressionAtlas" id="A6NK53">
    <property type="expression patterns" value="baseline and differential"/>
</dbReference>
<dbReference type="GO" id="GO:0005634">
    <property type="term" value="C:nucleus"/>
    <property type="evidence" value="ECO:0007669"/>
    <property type="project" value="UniProtKB-SubCell"/>
</dbReference>
<dbReference type="GO" id="GO:0003677">
    <property type="term" value="F:DNA binding"/>
    <property type="evidence" value="ECO:0007669"/>
    <property type="project" value="UniProtKB-KW"/>
</dbReference>
<dbReference type="GO" id="GO:0003700">
    <property type="term" value="F:DNA-binding transcription factor activity"/>
    <property type="evidence" value="ECO:0000303"/>
    <property type="project" value="ARUK-UCL"/>
</dbReference>
<dbReference type="GO" id="GO:0008270">
    <property type="term" value="F:zinc ion binding"/>
    <property type="evidence" value="ECO:0007669"/>
    <property type="project" value="UniProtKB-KW"/>
</dbReference>
<dbReference type="CDD" id="cd07765">
    <property type="entry name" value="KRAB_A-box"/>
    <property type="match status" value="1"/>
</dbReference>
<dbReference type="FunFam" id="3.30.160.60:FF:000781">
    <property type="entry name" value="zinc finger protein 205 isoform X1"/>
    <property type="match status" value="2"/>
</dbReference>
<dbReference type="FunFam" id="3.30.160.60:FF:001534">
    <property type="entry name" value="zinc finger protein 227 isoform X1"/>
    <property type="match status" value="1"/>
</dbReference>
<dbReference type="FunFam" id="3.30.160.60:FF:003468">
    <property type="entry name" value="Zinc finger protein 233"/>
    <property type="match status" value="1"/>
</dbReference>
<dbReference type="FunFam" id="3.30.160.60:FF:003767">
    <property type="entry name" value="Zinc finger protein 233"/>
    <property type="match status" value="1"/>
</dbReference>
<dbReference type="FunFam" id="3.30.160.60:FF:002343">
    <property type="entry name" value="Zinc finger protein 33A"/>
    <property type="match status" value="2"/>
</dbReference>
<dbReference type="FunFam" id="3.30.160.60:FF:000663">
    <property type="entry name" value="Zinc finger protein 45"/>
    <property type="match status" value="1"/>
</dbReference>
<dbReference type="FunFam" id="3.30.160.60:FF:000176">
    <property type="entry name" value="zinc finger protein 70"/>
    <property type="match status" value="1"/>
</dbReference>
<dbReference type="Gene3D" id="6.10.140.140">
    <property type="match status" value="1"/>
</dbReference>
<dbReference type="Gene3D" id="3.30.160.60">
    <property type="entry name" value="Classic Zinc Finger"/>
    <property type="match status" value="11"/>
</dbReference>
<dbReference type="InterPro" id="IPR050752">
    <property type="entry name" value="C2H2-ZF_domain"/>
</dbReference>
<dbReference type="InterPro" id="IPR001909">
    <property type="entry name" value="KRAB"/>
</dbReference>
<dbReference type="InterPro" id="IPR036051">
    <property type="entry name" value="KRAB_dom_sf"/>
</dbReference>
<dbReference type="InterPro" id="IPR036236">
    <property type="entry name" value="Znf_C2H2_sf"/>
</dbReference>
<dbReference type="InterPro" id="IPR013087">
    <property type="entry name" value="Znf_C2H2_type"/>
</dbReference>
<dbReference type="PANTHER" id="PTHR24384">
    <property type="entry name" value="FINGER PUTATIVE TRANSCRIPTION FACTOR FAMILY-RELATED"/>
    <property type="match status" value="1"/>
</dbReference>
<dbReference type="PANTHER" id="PTHR24384:SF242">
    <property type="entry name" value="ZINC FINGER PROTEIN 628"/>
    <property type="match status" value="1"/>
</dbReference>
<dbReference type="Pfam" id="PF01352">
    <property type="entry name" value="KRAB"/>
    <property type="match status" value="1"/>
</dbReference>
<dbReference type="Pfam" id="PF00096">
    <property type="entry name" value="zf-C2H2"/>
    <property type="match status" value="6"/>
</dbReference>
<dbReference type="SMART" id="SM00349">
    <property type="entry name" value="KRAB"/>
    <property type="match status" value="1"/>
</dbReference>
<dbReference type="SMART" id="SM00355">
    <property type="entry name" value="ZnF_C2H2"/>
    <property type="match status" value="8"/>
</dbReference>
<dbReference type="SUPFAM" id="SSF57667">
    <property type="entry name" value="beta-beta-alpha zinc fingers"/>
    <property type="match status" value="7"/>
</dbReference>
<dbReference type="SUPFAM" id="SSF109640">
    <property type="entry name" value="KRAB domain (Kruppel-associated box)"/>
    <property type="match status" value="1"/>
</dbReference>
<dbReference type="PROSITE" id="PS50805">
    <property type="entry name" value="KRAB"/>
    <property type="match status" value="1"/>
</dbReference>
<dbReference type="PROSITE" id="PS00028">
    <property type="entry name" value="ZINC_FINGER_C2H2_1"/>
    <property type="match status" value="7"/>
</dbReference>
<dbReference type="PROSITE" id="PS50157">
    <property type="entry name" value="ZINC_FINGER_C2H2_2"/>
    <property type="match status" value="8"/>
</dbReference>